<protein>
    <recommendedName>
        <fullName>Transmembrane protein 9B</fullName>
    </recommendedName>
</protein>
<gene>
    <name type="primary">Tmem9b</name>
</gene>
<keyword id="KW-0967">Endosome</keyword>
<keyword id="KW-0325">Glycoprotein</keyword>
<keyword id="KW-0458">Lysosome</keyword>
<keyword id="KW-0472">Membrane</keyword>
<keyword id="KW-0597">Phosphoprotein</keyword>
<keyword id="KW-1185">Reference proteome</keyword>
<keyword id="KW-0732">Signal</keyword>
<keyword id="KW-0812">Transmembrane</keyword>
<keyword id="KW-1133">Transmembrane helix</keyword>
<sequence length="199" mass="22607">MASLWCGNLLRLGSGLSMSCLALSVLLLAQLTGAAKNFEDVRCKCICPPYKENPGHIYNKNISQKDCDCLHVVEPMPVRGPDVEAYCLRCECKYEERSSVTIKVTIIIYLSILGLLLLYMVYLTLVEPILKRRLFGHSQLLQSDDDVGDHQPFANAHDVLARSRSRANVLNKVEYAQQRWKLQVQEQRKSVFDRHVVLS</sequence>
<reference key="1">
    <citation type="journal article" date="2001" name="Cytogenet. Cell Genet.">
        <title>Comparative genomic sequencing reveals a strikingly similar architecture of a conserved syntenic region on human chromosome 11p15.3 (including gene ST5) and mouse chromosome 7.</title>
        <authorList>
            <person name="Amid C."/>
            <person name="Bahr A."/>
            <person name="Mujica A."/>
            <person name="Sampson N."/>
            <person name="Bikar S.E."/>
            <person name="Winterpacht A."/>
            <person name="Zabel B."/>
            <person name="Hankeln T."/>
            <person name="Schmidt E.R."/>
        </authorList>
    </citation>
    <scope>NUCLEOTIDE SEQUENCE [GENOMIC DNA]</scope>
</reference>
<reference key="2">
    <citation type="journal article" date="2005" name="Science">
        <title>The transcriptional landscape of the mammalian genome.</title>
        <authorList>
            <person name="Carninci P."/>
            <person name="Kasukawa T."/>
            <person name="Katayama S."/>
            <person name="Gough J."/>
            <person name="Frith M.C."/>
            <person name="Maeda N."/>
            <person name="Oyama R."/>
            <person name="Ravasi T."/>
            <person name="Lenhard B."/>
            <person name="Wells C."/>
            <person name="Kodzius R."/>
            <person name="Shimokawa K."/>
            <person name="Bajic V.B."/>
            <person name="Brenner S.E."/>
            <person name="Batalov S."/>
            <person name="Forrest A.R."/>
            <person name="Zavolan M."/>
            <person name="Davis M.J."/>
            <person name="Wilming L.G."/>
            <person name="Aidinis V."/>
            <person name="Allen J.E."/>
            <person name="Ambesi-Impiombato A."/>
            <person name="Apweiler R."/>
            <person name="Aturaliya R.N."/>
            <person name="Bailey T.L."/>
            <person name="Bansal M."/>
            <person name="Baxter L."/>
            <person name="Beisel K.W."/>
            <person name="Bersano T."/>
            <person name="Bono H."/>
            <person name="Chalk A.M."/>
            <person name="Chiu K.P."/>
            <person name="Choudhary V."/>
            <person name="Christoffels A."/>
            <person name="Clutterbuck D.R."/>
            <person name="Crowe M.L."/>
            <person name="Dalla E."/>
            <person name="Dalrymple B.P."/>
            <person name="de Bono B."/>
            <person name="Della Gatta G."/>
            <person name="di Bernardo D."/>
            <person name="Down T."/>
            <person name="Engstrom P."/>
            <person name="Fagiolini M."/>
            <person name="Faulkner G."/>
            <person name="Fletcher C.F."/>
            <person name="Fukushima T."/>
            <person name="Furuno M."/>
            <person name="Futaki S."/>
            <person name="Gariboldi M."/>
            <person name="Georgii-Hemming P."/>
            <person name="Gingeras T.R."/>
            <person name="Gojobori T."/>
            <person name="Green R.E."/>
            <person name="Gustincich S."/>
            <person name="Harbers M."/>
            <person name="Hayashi Y."/>
            <person name="Hensch T.K."/>
            <person name="Hirokawa N."/>
            <person name="Hill D."/>
            <person name="Huminiecki L."/>
            <person name="Iacono M."/>
            <person name="Ikeo K."/>
            <person name="Iwama A."/>
            <person name="Ishikawa T."/>
            <person name="Jakt M."/>
            <person name="Kanapin A."/>
            <person name="Katoh M."/>
            <person name="Kawasawa Y."/>
            <person name="Kelso J."/>
            <person name="Kitamura H."/>
            <person name="Kitano H."/>
            <person name="Kollias G."/>
            <person name="Krishnan S.P."/>
            <person name="Kruger A."/>
            <person name="Kummerfeld S.K."/>
            <person name="Kurochkin I.V."/>
            <person name="Lareau L.F."/>
            <person name="Lazarevic D."/>
            <person name="Lipovich L."/>
            <person name="Liu J."/>
            <person name="Liuni S."/>
            <person name="McWilliam S."/>
            <person name="Madan Babu M."/>
            <person name="Madera M."/>
            <person name="Marchionni L."/>
            <person name="Matsuda H."/>
            <person name="Matsuzawa S."/>
            <person name="Miki H."/>
            <person name="Mignone F."/>
            <person name="Miyake S."/>
            <person name="Morris K."/>
            <person name="Mottagui-Tabar S."/>
            <person name="Mulder N."/>
            <person name="Nakano N."/>
            <person name="Nakauchi H."/>
            <person name="Ng P."/>
            <person name="Nilsson R."/>
            <person name="Nishiguchi S."/>
            <person name="Nishikawa S."/>
            <person name="Nori F."/>
            <person name="Ohara O."/>
            <person name="Okazaki Y."/>
            <person name="Orlando V."/>
            <person name="Pang K.C."/>
            <person name="Pavan W.J."/>
            <person name="Pavesi G."/>
            <person name="Pesole G."/>
            <person name="Petrovsky N."/>
            <person name="Piazza S."/>
            <person name="Reed J."/>
            <person name="Reid J.F."/>
            <person name="Ring B.Z."/>
            <person name="Ringwald M."/>
            <person name="Rost B."/>
            <person name="Ruan Y."/>
            <person name="Salzberg S.L."/>
            <person name="Sandelin A."/>
            <person name="Schneider C."/>
            <person name="Schoenbach C."/>
            <person name="Sekiguchi K."/>
            <person name="Semple C.A."/>
            <person name="Seno S."/>
            <person name="Sessa L."/>
            <person name="Sheng Y."/>
            <person name="Shibata Y."/>
            <person name="Shimada H."/>
            <person name="Shimada K."/>
            <person name="Silva D."/>
            <person name="Sinclair B."/>
            <person name="Sperling S."/>
            <person name="Stupka E."/>
            <person name="Sugiura K."/>
            <person name="Sultana R."/>
            <person name="Takenaka Y."/>
            <person name="Taki K."/>
            <person name="Tammoja K."/>
            <person name="Tan S.L."/>
            <person name="Tang S."/>
            <person name="Taylor M.S."/>
            <person name="Tegner J."/>
            <person name="Teichmann S.A."/>
            <person name="Ueda H.R."/>
            <person name="van Nimwegen E."/>
            <person name="Verardo R."/>
            <person name="Wei C.L."/>
            <person name="Yagi K."/>
            <person name="Yamanishi H."/>
            <person name="Zabarovsky E."/>
            <person name="Zhu S."/>
            <person name="Zimmer A."/>
            <person name="Hide W."/>
            <person name="Bult C."/>
            <person name="Grimmond S.M."/>
            <person name="Teasdale R.D."/>
            <person name="Liu E.T."/>
            <person name="Brusic V."/>
            <person name="Quackenbush J."/>
            <person name="Wahlestedt C."/>
            <person name="Mattick J.S."/>
            <person name="Hume D.A."/>
            <person name="Kai C."/>
            <person name="Sasaki D."/>
            <person name="Tomaru Y."/>
            <person name="Fukuda S."/>
            <person name="Kanamori-Katayama M."/>
            <person name="Suzuki M."/>
            <person name="Aoki J."/>
            <person name="Arakawa T."/>
            <person name="Iida J."/>
            <person name="Imamura K."/>
            <person name="Itoh M."/>
            <person name="Kato T."/>
            <person name="Kawaji H."/>
            <person name="Kawagashira N."/>
            <person name="Kawashima T."/>
            <person name="Kojima M."/>
            <person name="Kondo S."/>
            <person name="Konno H."/>
            <person name="Nakano K."/>
            <person name="Ninomiya N."/>
            <person name="Nishio T."/>
            <person name="Okada M."/>
            <person name="Plessy C."/>
            <person name="Shibata K."/>
            <person name="Shiraki T."/>
            <person name="Suzuki S."/>
            <person name="Tagami M."/>
            <person name="Waki K."/>
            <person name="Watahiki A."/>
            <person name="Okamura-Oho Y."/>
            <person name="Suzuki H."/>
            <person name="Kawai J."/>
            <person name="Hayashizaki Y."/>
        </authorList>
    </citation>
    <scope>NUCLEOTIDE SEQUENCE [LARGE SCALE MRNA]</scope>
    <source>
        <strain>C57BL/6J</strain>
        <tissue>Ovary</tissue>
        <tissue>Pancreas</tissue>
        <tissue>Tongue</tissue>
    </source>
</reference>
<reference key="3">
    <citation type="journal article" date="2004" name="Genome Res.">
        <title>The status, quality, and expansion of the NIH full-length cDNA project: the Mammalian Gene Collection (MGC).</title>
        <authorList>
            <consortium name="The MGC Project Team"/>
        </authorList>
    </citation>
    <scope>NUCLEOTIDE SEQUENCE [LARGE SCALE MRNA]</scope>
</reference>
<reference key="4">
    <citation type="journal article" date="2009" name="Immunity">
        <title>The phagosomal proteome in interferon-gamma-activated macrophages.</title>
        <authorList>
            <person name="Trost M."/>
            <person name="English L."/>
            <person name="Lemieux S."/>
            <person name="Courcelles M."/>
            <person name="Desjardins M."/>
            <person name="Thibault P."/>
        </authorList>
    </citation>
    <scope>PHOSPHORYLATION [LARGE SCALE ANALYSIS] AT SER-143</scope>
    <scope>IDENTIFICATION BY MASS SPECTROMETRY [LARGE SCALE ANALYSIS]</scope>
</reference>
<reference key="5">
    <citation type="journal article" date="2010" name="Cell">
        <title>A tissue-specific atlas of mouse protein phosphorylation and expression.</title>
        <authorList>
            <person name="Huttlin E.L."/>
            <person name="Jedrychowski M.P."/>
            <person name="Elias J.E."/>
            <person name="Goswami T."/>
            <person name="Rad R."/>
            <person name="Beausoleil S.A."/>
            <person name="Villen J."/>
            <person name="Haas W."/>
            <person name="Sowa M.E."/>
            <person name="Gygi S.P."/>
        </authorList>
    </citation>
    <scope>IDENTIFICATION BY MASS SPECTROMETRY [LARGE SCALE ANALYSIS]</scope>
    <source>
        <tissue>Brain</tissue>
        <tissue>Kidney</tissue>
        <tissue>Liver</tissue>
        <tissue>Lung</tissue>
        <tissue>Spleen</tissue>
        <tissue>Testis</tissue>
    </source>
</reference>
<comment type="function">
    <text evidence="1">Enhances production of pro-inflammatory cytokines induced by TNF, IL1B, and TLR ligands. Has a role in TNF activation of both the NF-kappaB and MAPK pathways.</text>
</comment>
<comment type="subcellular location">
    <subcellularLocation>
        <location evidence="1">Lysosome membrane</location>
        <topology evidence="2">Single-pass membrane protein</topology>
    </subcellularLocation>
    <subcellularLocation>
        <location evidence="1">Early endosome membrane</location>
        <topology evidence="2">Single-pass membrane protein</topology>
    </subcellularLocation>
</comment>
<comment type="PTM">
    <text evidence="1">N-glycosylated.</text>
</comment>
<comment type="similarity">
    <text evidence="4">Belongs to the TMEM9 family.</text>
</comment>
<proteinExistence type="evidence at protein level"/>
<dbReference type="EMBL" id="AJ400878">
    <property type="protein sequence ID" value="CAB92295.1"/>
    <property type="molecule type" value="Genomic_DNA"/>
</dbReference>
<dbReference type="EMBL" id="AK009147">
    <property type="protein sequence ID" value="BAB26105.1"/>
    <property type="molecule type" value="mRNA"/>
</dbReference>
<dbReference type="EMBL" id="AK007430">
    <property type="protein sequence ID" value="BAB25033.1"/>
    <property type="molecule type" value="mRNA"/>
</dbReference>
<dbReference type="EMBL" id="AK077253">
    <property type="protein sequence ID" value="BAC36710.1"/>
    <property type="molecule type" value="mRNA"/>
</dbReference>
<dbReference type="EMBL" id="BC002208">
    <property type="protein sequence ID" value="AAH02208.1"/>
    <property type="molecule type" value="mRNA"/>
</dbReference>
<dbReference type="CCDS" id="CCDS21738.1"/>
<dbReference type="RefSeq" id="NP_064434.1">
    <property type="nucleotide sequence ID" value="NM_020050.1"/>
</dbReference>
<dbReference type="BioGRID" id="208172">
    <property type="interactions" value="2"/>
</dbReference>
<dbReference type="FunCoup" id="Q9JJR8">
    <property type="interactions" value="272"/>
</dbReference>
<dbReference type="STRING" id="10090.ENSMUSP00000033333"/>
<dbReference type="GlyCosmos" id="Q9JJR8">
    <property type="glycosylation" value="1 site, No reported glycans"/>
</dbReference>
<dbReference type="GlyGen" id="Q9JJR8">
    <property type="glycosylation" value="1 site, 1 N-linked glycan (1 site)"/>
</dbReference>
<dbReference type="iPTMnet" id="Q9JJR8"/>
<dbReference type="PhosphoSitePlus" id="Q9JJR8"/>
<dbReference type="SwissPalm" id="Q9JJR8"/>
<dbReference type="PaxDb" id="10090-ENSMUSP00000033333"/>
<dbReference type="PeptideAtlas" id="Q9JJR8"/>
<dbReference type="ProteomicsDB" id="259138"/>
<dbReference type="Pumba" id="Q9JJR8"/>
<dbReference type="Antibodypedia" id="48632">
    <property type="antibodies" value="16 antibodies from 11 providers"/>
</dbReference>
<dbReference type="DNASU" id="56786"/>
<dbReference type="Ensembl" id="ENSMUST00000033333.13">
    <property type="protein sequence ID" value="ENSMUSP00000033333.7"/>
    <property type="gene ID" value="ENSMUSG00000031021.14"/>
</dbReference>
<dbReference type="GeneID" id="56786"/>
<dbReference type="KEGG" id="mmu:56786"/>
<dbReference type="UCSC" id="uc009jec.1">
    <property type="organism name" value="mouse"/>
</dbReference>
<dbReference type="AGR" id="MGI:1915254"/>
<dbReference type="CTD" id="56674"/>
<dbReference type="MGI" id="MGI:1915254">
    <property type="gene designation" value="Tmem9b"/>
</dbReference>
<dbReference type="VEuPathDB" id="HostDB:ENSMUSG00000031021"/>
<dbReference type="eggNOG" id="KOG4007">
    <property type="taxonomic scope" value="Eukaryota"/>
</dbReference>
<dbReference type="GeneTree" id="ENSGT00390000000819"/>
<dbReference type="HOGENOM" id="CLU_093267_2_0_1"/>
<dbReference type="InParanoid" id="Q9JJR8"/>
<dbReference type="OMA" id="DDKRCKC"/>
<dbReference type="OrthoDB" id="10059035at2759"/>
<dbReference type="PhylomeDB" id="Q9JJR8"/>
<dbReference type="TreeFam" id="TF315146"/>
<dbReference type="BioGRID-ORCS" id="56786">
    <property type="hits" value="2 hits in 78 CRISPR screens"/>
</dbReference>
<dbReference type="ChiTaRS" id="Tmem9b">
    <property type="organism name" value="mouse"/>
</dbReference>
<dbReference type="PRO" id="PR:Q9JJR8"/>
<dbReference type="Proteomes" id="UP000000589">
    <property type="component" value="Chromosome 7"/>
</dbReference>
<dbReference type="RNAct" id="Q9JJR8">
    <property type="molecule type" value="protein"/>
</dbReference>
<dbReference type="Bgee" id="ENSMUSG00000031021">
    <property type="expression patterns" value="Expressed in placenta labyrinth and 264 other cell types or tissues"/>
</dbReference>
<dbReference type="ExpressionAtlas" id="Q9JJR8">
    <property type="expression patterns" value="baseline and differential"/>
</dbReference>
<dbReference type="GO" id="GO:0031901">
    <property type="term" value="C:early endosome membrane"/>
    <property type="evidence" value="ECO:0007669"/>
    <property type="project" value="UniProtKB-SubCell"/>
</dbReference>
<dbReference type="GO" id="GO:0005765">
    <property type="term" value="C:lysosomal membrane"/>
    <property type="evidence" value="ECO:0007669"/>
    <property type="project" value="UniProtKB-SubCell"/>
</dbReference>
<dbReference type="InterPro" id="IPR008853">
    <property type="entry name" value="TMEM9/TMEM9B"/>
</dbReference>
<dbReference type="PANTHER" id="PTHR13064">
    <property type="entry name" value="TRANSMEMBRANE PROTEIN 9 FAMILY MEMBER"/>
    <property type="match status" value="1"/>
</dbReference>
<dbReference type="PANTHER" id="PTHR13064:SF2">
    <property type="entry name" value="TRANSMEMBRANE PROTEIN 9B"/>
    <property type="match status" value="1"/>
</dbReference>
<dbReference type="Pfam" id="PF05434">
    <property type="entry name" value="Tmemb_9"/>
    <property type="match status" value="1"/>
</dbReference>
<organism>
    <name type="scientific">Mus musculus</name>
    <name type="common">Mouse</name>
    <dbReference type="NCBI Taxonomy" id="10090"/>
    <lineage>
        <taxon>Eukaryota</taxon>
        <taxon>Metazoa</taxon>
        <taxon>Chordata</taxon>
        <taxon>Craniata</taxon>
        <taxon>Vertebrata</taxon>
        <taxon>Euteleostomi</taxon>
        <taxon>Mammalia</taxon>
        <taxon>Eutheria</taxon>
        <taxon>Euarchontoglires</taxon>
        <taxon>Glires</taxon>
        <taxon>Rodentia</taxon>
        <taxon>Myomorpha</taxon>
        <taxon>Muroidea</taxon>
        <taxon>Muridae</taxon>
        <taxon>Murinae</taxon>
        <taxon>Mus</taxon>
        <taxon>Mus</taxon>
    </lineage>
</organism>
<accession>Q9JJR8</accession>
<evidence type="ECO:0000250" key="1">
    <source>
        <dbReference type="UniProtKB" id="Q9NQ34"/>
    </source>
</evidence>
<evidence type="ECO:0000255" key="2"/>
<evidence type="ECO:0000255" key="3">
    <source>
        <dbReference type="PROSITE-ProRule" id="PRU00498"/>
    </source>
</evidence>
<evidence type="ECO:0000305" key="4"/>
<evidence type="ECO:0007744" key="5">
    <source>
    </source>
</evidence>
<name>TMM9B_MOUSE</name>
<feature type="signal peptide" evidence="2">
    <location>
        <begin position="1"/>
        <end position="34"/>
    </location>
</feature>
<feature type="chain" id="PRO_0000045787" description="Transmembrane protein 9B">
    <location>
        <begin position="35"/>
        <end position="199"/>
    </location>
</feature>
<feature type="transmembrane region" description="Helical" evidence="2">
    <location>
        <begin position="106"/>
        <end position="126"/>
    </location>
</feature>
<feature type="modified residue" description="Phosphoserine" evidence="5">
    <location>
        <position position="143"/>
    </location>
</feature>
<feature type="modified residue" description="Phosphoserine" evidence="1">
    <location>
        <position position="190"/>
    </location>
</feature>
<feature type="glycosylation site" description="N-linked (GlcNAc...) asparagine" evidence="3">
    <location>
        <position position="61"/>
    </location>
</feature>